<reference key="1">
    <citation type="submission" date="2008-12" db="EMBL/GenBank/DDBJ databases">
        <title>Complete sequence of chromosome of Shewanella baltica OS223.</title>
        <authorList>
            <consortium name="US DOE Joint Genome Institute"/>
            <person name="Lucas S."/>
            <person name="Copeland A."/>
            <person name="Lapidus A."/>
            <person name="Glavina del Rio T."/>
            <person name="Dalin E."/>
            <person name="Tice H."/>
            <person name="Bruce D."/>
            <person name="Goodwin L."/>
            <person name="Pitluck S."/>
            <person name="Chertkov O."/>
            <person name="Meincke L."/>
            <person name="Brettin T."/>
            <person name="Detter J.C."/>
            <person name="Han C."/>
            <person name="Kuske C.R."/>
            <person name="Larimer F."/>
            <person name="Land M."/>
            <person name="Hauser L."/>
            <person name="Kyrpides N."/>
            <person name="Ovchinnikova G."/>
            <person name="Brettar I."/>
            <person name="Rodrigues J."/>
            <person name="Konstantinidis K."/>
            <person name="Tiedje J."/>
        </authorList>
    </citation>
    <scope>NUCLEOTIDE SEQUENCE [LARGE SCALE GENOMIC DNA]</scope>
    <source>
        <strain>OS223</strain>
    </source>
</reference>
<feature type="chain" id="PRO_1000190539" description="Glutamyl-tRNA reductase">
    <location>
        <begin position="1"/>
        <end position="416"/>
    </location>
</feature>
<feature type="active site" description="Nucleophile" evidence="1">
    <location>
        <position position="50"/>
    </location>
</feature>
<feature type="binding site" evidence="1">
    <location>
        <begin position="49"/>
        <end position="52"/>
    </location>
    <ligand>
        <name>substrate</name>
    </ligand>
</feature>
<feature type="binding site" evidence="1">
    <location>
        <position position="105"/>
    </location>
    <ligand>
        <name>substrate</name>
    </ligand>
</feature>
<feature type="binding site" evidence="1">
    <location>
        <begin position="110"/>
        <end position="112"/>
    </location>
    <ligand>
        <name>substrate</name>
    </ligand>
</feature>
<feature type="binding site" evidence="1">
    <location>
        <position position="116"/>
    </location>
    <ligand>
        <name>substrate</name>
    </ligand>
</feature>
<feature type="binding site" evidence="1">
    <location>
        <begin position="185"/>
        <end position="190"/>
    </location>
    <ligand>
        <name>NADP(+)</name>
        <dbReference type="ChEBI" id="CHEBI:58349"/>
    </ligand>
</feature>
<feature type="site" description="Important for activity" evidence="1">
    <location>
        <position position="95"/>
    </location>
</feature>
<comment type="function">
    <text evidence="1">Catalyzes the NADPH-dependent reduction of glutamyl-tRNA(Glu) to glutamate 1-semialdehyde (GSA).</text>
</comment>
<comment type="catalytic activity">
    <reaction evidence="1">
        <text>(S)-4-amino-5-oxopentanoate + tRNA(Glu) + NADP(+) = L-glutamyl-tRNA(Glu) + NADPH + H(+)</text>
        <dbReference type="Rhea" id="RHEA:12344"/>
        <dbReference type="Rhea" id="RHEA-COMP:9663"/>
        <dbReference type="Rhea" id="RHEA-COMP:9680"/>
        <dbReference type="ChEBI" id="CHEBI:15378"/>
        <dbReference type="ChEBI" id="CHEBI:57501"/>
        <dbReference type="ChEBI" id="CHEBI:57783"/>
        <dbReference type="ChEBI" id="CHEBI:58349"/>
        <dbReference type="ChEBI" id="CHEBI:78442"/>
        <dbReference type="ChEBI" id="CHEBI:78520"/>
        <dbReference type="EC" id="1.2.1.70"/>
    </reaction>
</comment>
<comment type="pathway">
    <text evidence="1">Porphyrin-containing compound metabolism; protoporphyrin-IX biosynthesis; 5-aminolevulinate from L-glutamyl-tRNA(Glu): step 1/2.</text>
</comment>
<comment type="subunit">
    <text evidence="1">Homodimer.</text>
</comment>
<comment type="domain">
    <text evidence="1">Possesses an unusual extended V-shaped dimeric structure with each monomer consisting of three distinct domains arranged along a curved 'spinal' alpha-helix. The N-terminal catalytic domain specifically recognizes the glutamate moiety of the substrate. The second domain is the NADPH-binding domain, and the third C-terminal domain is responsible for dimerization.</text>
</comment>
<comment type="miscellaneous">
    <text evidence="1">During catalysis, the active site Cys acts as a nucleophile attacking the alpha-carbonyl group of tRNA-bound glutamate with the formation of a thioester intermediate between enzyme and glutamate, and the concomitant release of tRNA(Glu). The thioester intermediate is finally reduced by direct hydride transfer from NADPH, to form the product GSA.</text>
</comment>
<comment type="similarity">
    <text evidence="1">Belongs to the glutamyl-tRNA reductase family.</text>
</comment>
<gene>
    <name evidence="1" type="primary">hemA</name>
    <name type="ordered locus">Sbal223_3547</name>
</gene>
<organism>
    <name type="scientific">Shewanella baltica (strain OS223)</name>
    <dbReference type="NCBI Taxonomy" id="407976"/>
    <lineage>
        <taxon>Bacteria</taxon>
        <taxon>Pseudomonadati</taxon>
        <taxon>Pseudomonadota</taxon>
        <taxon>Gammaproteobacteria</taxon>
        <taxon>Alteromonadales</taxon>
        <taxon>Shewanellaceae</taxon>
        <taxon>Shewanella</taxon>
    </lineage>
</organism>
<accession>B8E816</accession>
<evidence type="ECO:0000255" key="1">
    <source>
        <dbReference type="HAMAP-Rule" id="MF_00087"/>
    </source>
</evidence>
<dbReference type="EC" id="1.2.1.70" evidence="1"/>
<dbReference type="EMBL" id="CP001252">
    <property type="protein sequence ID" value="ACK48029.1"/>
    <property type="molecule type" value="Genomic_DNA"/>
</dbReference>
<dbReference type="RefSeq" id="WP_006084077.1">
    <property type="nucleotide sequence ID" value="NC_011663.1"/>
</dbReference>
<dbReference type="SMR" id="B8E816"/>
<dbReference type="GeneID" id="11774974"/>
<dbReference type="KEGG" id="sbp:Sbal223_3547"/>
<dbReference type="HOGENOM" id="CLU_035113_2_2_6"/>
<dbReference type="UniPathway" id="UPA00251">
    <property type="reaction ID" value="UER00316"/>
</dbReference>
<dbReference type="Proteomes" id="UP000002507">
    <property type="component" value="Chromosome"/>
</dbReference>
<dbReference type="GO" id="GO:0008883">
    <property type="term" value="F:glutamyl-tRNA reductase activity"/>
    <property type="evidence" value="ECO:0007669"/>
    <property type="project" value="UniProtKB-UniRule"/>
</dbReference>
<dbReference type="GO" id="GO:0050661">
    <property type="term" value="F:NADP binding"/>
    <property type="evidence" value="ECO:0007669"/>
    <property type="project" value="InterPro"/>
</dbReference>
<dbReference type="GO" id="GO:0019353">
    <property type="term" value="P:protoporphyrinogen IX biosynthetic process from glutamate"/>
    <property type="evidence" value="ECO:0007669"/>
    <property type="project" value="TreeGrafter"/>
</dbReference>
<dbReference type="CDD" id="cd05213">
    <property type="entry name" value="NAD_bind_Glutamyl_tRNA_reduct"/>
    <property type="match status" value="1"/>
</dbReference>
<dbReference type="FunFam" id="3.30.460.30:FF:000001">
    <property type="entry name" value="Glutamyl-tRNA reductase"/>
    <property type="match status" value="1"/>
</dbReference>
<dbReference type="FunFam" id="3.40.50.720:FF:000031">
    <property type="entry name" value="Glutamyl-tRNA reductase"/>
    <property type="match status" value="1"/>
</dbReference>
<dbReference type="Gene3D" id="3.30.460.30">
    <property type="entry name" value="Glutamyl-tRNA reductase, N-terminal domain"/>
    <property type="match status" value="1"/>
</dbReference>
<dbReference type="Gene3D" id="3.40.50.720">
    <property type="entry name" value="NAD(P)-binding Rossmann-like Domain"/>
    <property type="match status" value="1"/>
</dbReference>
<dbReference type="HAMAP" id="MF_00087">
    <property type="entry name" value="Glu_tRNA_reductase"/>
    <property type="match status" value="1"/>
</dbReference>
<dbReference type="InterPro" id="IPR000343">
    <property type="entry name" value="4pyrrol_synth_GluRdtase"/>
</dbReference>
<dbReference type="InterPro" id="IPR015896">
    <property type="entry name" value="4pyrrol_synth_GluRdtase_dimer"/>
</dbReference>
<dbReference type="InterPro" id="IPR015895">
    <property type="entry name" value="4pyrrol_synth_GluRdtase_N"/>
</dbReference>
<dbReference type="InterPro" id="IPR018214">
    <property type="entry name" value="GluRdtase_CS"/>
</dbReference>
<dbReference type="InterPro" id="IPR036453">
    <property type="entry name" value="GluRdtase_dimer_dom_sf"/>
</dbReference>
<dbReference type="InterPro" id="IPR036343">
    <property type="entry name" value="GluRdtase_N_sf"/>
</dbReference>
<dbReference type="InterPro" id="IPR036291">
    <property type="entry name" value="NAD(P)-bd_dom_sf"/>
</dbReference>
<dbReference type="InterPro" id="IPR006151">
    <property type="entry name" value="Shikm_DH/Glu-tRNA_Rdtase"/>
</dbReference>
<dbReference type="NCBIfam" id="TIGR01035">
    <property type="entry name" value="hemA"/>
    <property type="match status" value="1"/>
</dbReference>
<dbReference type="PANTHER" id="PTHR43013">
    <property type="entry name" value="GLUTAMYL-TRNA REDUCTASE"/>
    <property type="match status" value="1"/>
</dbReference>
<dbReference type="PANTHER" id="PTHR43013:SF1">
    <property type="entry name" value="GLUTAMYL-TRNA REDUCTASE"/>
    <property type="match status" value="1"/>
</dbReference>
<dbReference type="Pfam" id="PF00745">
    <property type="entry name" value="GlutR_dimer"/>
    <property type="match status" value="1"/>
</dbReference>
<dbReference type="Pfam" id="PF05201">
    <property type="entry name" value="GlutR_N"/>
    <property type="match status" value="1"/>
</dbReference>
<dbReference type="Pfam" id="PF01488">
    <property type="entry name" value="Shikimate_DH"/>
    <property type="match status" value="1"/>
</dbReference>
<dbReference type="PIRSF" id="PIRSF000445">
    <property type="entry name" value="4pyrrol_synth_GluRdtase"/>
    <property type="match status" value="1"/>
</dbReference>
<dbReference type="SUPFAM" id="SSF69742">
    <property type="entry name" value="Glutamyl tRNA-reductase catalytic, N-terminal domain"/>
    <property type="match status" value="1"/>
</dbReference>
<dbReference type="SUPFAM" id="SSF69075">
    <property type="entry name" value="Glutamyl tRNA-reductase dimerization domain"/>
    <property type="match status" value="1"/>
</dbReference>
<dbReference type="SUPFAM" id="SSF51735">
    <property type="entry name" value="NAD(P)-binding Rossmann-fold domains"/>
    <property type="match status" value="1"/>
</dbReference>
<dbReference type="PROSITE" id="PS00747">
    <property type="entry name" value="GLUTR"/>
    <property type="match status" value="1"/>
</dbReference>
<name>HEM1_SHEB2</name>
<keyword id="KW-0521">NADP</keyword>
<keyword id="KW-0560">Oxidoreductase</keyword>
<keyword id="KW-0627">Porphyrin biosynthesis</keyword>
<proteinExistence type="inferred from homology"/>
<sequence>MSLVAIGINHKTATVDLREKVAFSPDKIHDAMKSLASRTRSGEAVIVSTCNRTELYCNNGDEADIIAWLEEYHGLDHKDVAPCLYNYHGQDAVRHLMRVASGLDSLILGEPQILGQVKQAFVKAKEAGTVALTIDRLFQNTFSVAKKVRTDTEIGAAAVSVAFAAVSMAKHIFSSISTTKVLLIGAGETIELVAKHLKDNGVASMVVANRTLERAQGMCEEFGATAITLAQIPDYLPKADIVISSTASPLPILGKGMVEKALKQRRHQPMLLVDIAVPRDIEPEVADLDDAFLYTVDDLHSIIEQNMASRKEAAEQAEVITEEQSFLFMDWIRSLESVDSIREYRSQSMAVKDELVERALNKLAQGSDTEQVLIELANRLTNKLIHAPTQALTAASRQGDLNTLGQLRSALGLDKN</sequence>
<protein>
    <recommendedName>
        <fullName evidence="1">Glutamyl-tRNA reductase</fullName>
        <shortName evidence="1">GluTR</shortName>
        <ecNumber evidence="1">1.2.1.70</ecNumber>
    </recommendedName>
</protein>